<gene>
    <name evidence="1" type="primary">buk</name>
    <name type="ordered locus">BT_2552</name>
</gene>
<protein>
    <recommendedName>
        <fullName evidence="1">Probable butyrate kinase</fullName>
        <shortName evidence="1">BK</shortName>
        <ecNumber evidence="1">2.7.2.7</ecNumber>
    </recommendedName>
    <alternativeName>
        <fullName evidence="1">Branched-chain carboxylic acid kinase</fullName>
    </alternativeName>
</protein>
<keyword id="KW-0067">ATP-binding</keyword>
<keyword id="KW-0963">Cytoplasm</keyword>
<keyword id="KW-0418">Kinase</keyword>
<keyword id="KW-0547">Nucleotide-binding</keyword>
<keyword id="KW-1185">Reference proteome</keyword>
<keyword id="KW-0808">Transferase</keyword>
<organism>
    <name type="scientific">Bacteroides thetaiotaomicron (strain ATCC 29148 / DSM 2079 / JCM 5827 / CCUG 10774 / NCTC 10582 / VPI-5482 / E50)</name>
    <dbReference type="NCBI Taxonomy" id="226186"/>
    <lineage>
        <taxon>Bacteria</taxon>
        <taxon>Pseudomonadati</taxon>
        <taxon>Bacteroidota</taxon>
        <taxon>Bacteroidia</taxon>
        <taxon>Bacteroidales</taxon>
        <taxon>Bacteroidaceae</taxon>
        <taxon>Bacteroides</taxon>
    </lineage>
</organism>
<evidence type="ECO:0000255" key="1">
    <source>
        <dbReference type="HAMAP-Rule" id="MF_00542"/>
    </source>
</evidence>
<sequence length="353" mass="37855">MKILVINPGSTSTKIAVYENETPLLVRNIKHTVEELSVYPQVIDQFEFRKNLVLQELEANGIPFAFDAVIGRGGLVKPIPGGVYAVNEAMKQDTLHAMRTHACNLGGLIAAELAASLPDCPAFIADPGVVDELEDVARISGSPLMPKITIWHALNQKAIARRFAKEQGTKYEELDLIICHLGGGISIAVHQHGKAIDANNALDGEGPFSPERAGTLPAGQLIDICYSGQFTKDELKKRISGRAGLTAHLGTTDVPAIIKAIEEGDKKAELILDAMIYNVAKAIGGAATVLCGKVDAILLTGGIAYSDYIISRLKKRISFLAPIHVYPGEGEMESLAFNALGALRGELPVQIYK</sequence>
<feature type="chain" id="PRO_0000107667" description="Probable butyrate kinase">
    <location>
        <begin position="1"/>
        <end position="353"/>
    </location>
</feature>
<accession>Q8A4P5</accession>
<proteinExistence type="inferred from homology"/>
<comment type="catalytic activity">
    <reaction evidence="1">
        <text>butanoate + ATP = butanoyl phosphate + ADP</text>
        <dbReference type="Rhea" id="RHEA:13585"/>
        <dbReference type="ChEBI" id="CHEBI:17968"/>
        <dbReference type="ChEBI" id="CHEBI:30616"/>
        <dbReference type="ChEBI" id="CHEBI:58079"/>
        <dbReference type="ChEBI" id="CHEBI:456216"/>
        <dbReference type="EC" id="2.7.2.7"/>
    </reaction>
</comment>
<comment type="subcellular location">
    <subcellularLocation>
        <location evidence="1">Cytoplasm</location>
    </subcellularLocation>
</comment>
<comment type="similarity">
    <text evidence="1">Belongs to the acetokinase family.</text>
</comment>
<name>BUK_BACTN</name>
<reference key="1">
    <citation type="journal article" date="2003" name="Science">
        <title>A genomic view of the human-Bacteroides thetaiotaomicron symbiosis.</title>
        <authorList>
            <person name="Xu J."/>
            <person name="Bjursell M.K."/>
            <person name="Himrod J."/>
            <person name="Deng S."/>
            <person name="Carmichael L.K."/>
            <person name="Chiang H.C."/>
            <person name="Hooper L.V."/>
            <person name="Gordon J.I."/>
        </authorList>
    </citation>
    <scope>NUCLEOTIDE SEQUENCE [LARGE SCALE GENOMIC DNA]</scope>
    <source>
        <strain>ATCC 29148 / DSM 2079 / JCM 5827 / CCUG 10774 / NCTC 10582 / VPI-5482 / E50</strain>
    </source>
</reference>
<dbReference type="EC" id="2.7.2.7" evidence="1"/>
<dbReference type="EMBL" id="AE015928">
    <property type="protein sequence ID" value="AAO77659.1"/>
    <property type="molecule type" value="Genomic_DNA"/>
</dbReference>
<dbReference type="RefSeq" id="NP_811465.1">
    <property type="nucleotide sequence ID" value="NC_004663.1"/>
</dbReference>
<dbReference type="RefSeq" id="WP_008765189.1">
    <property type="nucleotide sequence ID" value="NC_004663.1"/>
</dbReference>
<dbReference type="SMR" id="Q8A4P5"/>
<dbReference type="STRING" id="226186.BT_2552"/>
<dbReference type="PaxDb" id="226186-BT_2552"/>
<dbReference type="EnsemblBacteria" id="AAO77659">
    <property type="protein sequence ID" value="AAO77659"/>
    <property type="gene ID" value="BT_2552"/>
</dbReference>
<dbReference type="GeneID" id="60923724"/>
<dbReference type="KEGG" id="bth:BT_2552"/>
<dbReference type="PATRIC" id="fig|226186.12.peg.2603"/>
<dbReference type="eggNOG" id="COG3426">
    <property type="taxonomic scope" value="Bacteria"/>
</dbReference>
<dbReference type="HOGENOM" id="CLU_048716_0_0_10"/>
<dbReference type="InParanoid" id="Q8A4P5"/>
<dbReference type="OrthoDB" id="9771859at2"/>
<dbReference type="Proteomes" id="UP000001414">
    <property type="component" value="Chromosome"/>
</dbReference>
<dbReference type="GO" id="GO:0005737">
    <property type="term" value="C:cytoplasm"/>
    <property type="evidence" value="ECO:0007669"/>
    <property type="project" value="UniProtKB-SubCell"/>
</dbReference>
<dbReference type="GO" id="GO:0008776">
    <property type="term" value="F:acetate kinase activity"/>
    <property type="evidence" value="ECO:0000318"/>
    <property type="project" value="GO_Central"/>
</dbReference>
<dbReference type="GO" id="GO:0005524">
    <property type="term" value="F:ATP binding"/>
    <property type="evidence" value="ECO:0007669"/>
    <property type="project" value="UniProtKB-KW"/>
</dbReference>
<dbReference type="GO" id="GO:0047761">
    <property type="term" value="F:butyrate kinase activity"/>
    <property type="evidence" value="ECO:0007669"/>
    <property type="project" value="UniProtKB-UniRule"/>
</dbReference>
<dbReference type="GO" id="GO:0006083">
    <property type="term" value="P:acetate metabolic process"/>
    <property type="evidence" value="ECO:0000318"/>
    <property type="project" value="GO_Central"/>
</dbReference>
<dbReference type="CDD" id="cd24011">
    <property type="entry name" value="ASKHA_NBD_BK"/>
    <property type="match status" value="1"/>
</dbReference>
<dbReference type="Gene3D" id="3.30.420.40">
    <property type="match status" value="2"/>
</dbReference>
<dbReference type="HAMAP" id="MF_00542">
    <property type="entry name" value="Butyrate_kinase"/>
    <property type="match status" value="1"/>
</dbReference>
<dbReference type="InterPro" id="IPR000890">
    <property type="entry name" value="Aliphatic_acid_kin_short-chain"/>
</dbReference>
<dbReference type="InterPro" id="IPR023865">
    <property type="entry name" value="Aliphatic_acid_kinase_CS"/>
</dbReference>
<dbReference type="InterPro" id="IPR043129">
    <property type="entry name" value="ATPase_NBD"/>
</dbReference>
<dbReference type="InterPro" id="IPR011245">
    <property type="entry name" value="Butyrate_kin"/>
</dbReference>
<dbReference type="NCBIfam" id="TIGR02707">
    <property type="entry name" value="butyr_kinase"/>
    <property type="match status" value="1"/>
</dbReference>
<dbReference type="NCBIfam" id="NF002834">
    <property type="entry name" value="PRK03011.1-5"/>
    <property type="match status" value="1"/>
</dbReference>
<dbReference type="PANTHER" id="PTHR21060">
    <property type="entry name" value="ACETATE KINASE"/>
    <property type="match status" value="1"/>
</dbReference>
<dbReference type="PANTHER" id="PTHR21060:SF3">
    <property type="entry name" value="BUTYRATE KINASE 2-RELATED"/>
    <property type="match status" value="1"/>
</dbReference>
<dbReference type="Pfam" id="PF00871">
    <property type="entry name" value="Acetate_kinase"/>
    <property type="match status" value="1"/>
</dbReference>
<dbReference type="PIRSF" id="PIRSF036458">
    <property type="entry name" value="Butyrate_kin"/>
    <property type="match status" value="1"/>
</dbReference>
<dbReference type="PRINTS" id="PR00471">
    <property type="entry name" value="ACETATEKNASE"/>
</dbReference>
<dbReference type="SUPFAM" id="SSF53067">
    <property type="entry name" value="Actin-like ATPase domain"/>
    <property type="match status" value="2"/>
</dbReference>
<dbReference type="PROSITE" id="PS01075">
    <property type="entry name" value="ACETATE_KINASE_1"/>
    <property type="match status" value="1"/>
</dbReference>
<dbReference type="PROSITE" id="PS01076">
    <property type="entry name" value="ACETATE_KINASE_2"/>
    <property type="match status" value="1"/>
</dbReference>